<protein>
    <recommendedName>
        <fullName>Probable dipeptidase PepE</fullName>
        <ecNumber>3.4.13.-</ecNumber>
    </recommendedName>
</protein>
<name>PEPE_MYCBO</name>
<organism>
    <name type="scientific">Mycobacterium bovis (strain ATCC BAA-935 / AF2122/97)</name>
    <dbReference type="NCBI Taxonomy" id="233413"/>
    <lineage>
        <taxon>Bacteria</taxon>
        <taxon>Bacillati</taxon>
        <taxon>Actinomycetota</taxon>
        <taxon>Actinomycetes</taxon>
        <taxon>Mycobacteriales</taxon>
        <taxon>Mycobacteriaceae</taxon>
        <taxon>Mycobacterium</taxon>
        <taxon>Mycobacterium tuberculosis complex</taxon>
    </lineage>
</organism>
<proteinExistence type="inferred from homology"/>
<evidence type="ECO:0000255" key="1"/>
<evidence type="ECO:0000305" key="2"/>
<comment type="cofactor">
    <cofactor evidence="2">
        <name>Mn(2+)</name>
        <dbReference type="ChEBI" id="CHEBI:29035"/>
    </cofactor>
    <text evidence="2">Binds 2 manganese ions per subunit.</text>
</comment>
<comment type="subcellular location">
    <subcellularLocation>
        <location evidence="2">Cell membrane</location>
        <topology evidence="2">Multi-pass membrane protein</topology>
    </subcellularLocation>
</comment>
<comment type="similarity">
    <text evidence="2">Belongs to the peptidase M24B family.</text>
</comment>
<gene>
    <name type="primary">pepE</name>
    <name type="ordered locus">BQ2027_MB2116C</name>
</gene>
<keyword id="KW-1003">Cell membrane</keyword>
<keyword id="KW-0378">Hydrolase</keyword>
<keyword id="KW-0464">Manganese</keyword>
<keyword id="KW-0472">Membrane</keyword>
<keyword id="KW-0479">Metal-binding</keyword>
<keyword id="KW-1185">Reference proteome</keyword>
<keyword id="KW-0812">Transmembrane</keyword>
<keyword id="KW-1133">Transmembrane helix</keyword>
<sequence length="375" mass="39440">MGSRRFDAEVYARRLALAAAATADAGLAGLVITPGYDLCYLIGSRAETFERLTALVLPAAGAPAVVLPRLELAALKQSAAAELGLRVCDWVDGDDPYGLVSAVLGGAPVATAVTDSMPALHMLPLADALGVLPVLATDVLRRLRMVKEETEIDALRKAGAAIDRVHARVPEFLVPGRTEADVAADIAEAIVAEGHSEVAFVIVGSGPHGADPHHGYSDRELREGDIVVVDIGGTYGPGYHSDSTRTYSIGEPDSDVAQSYSMLQRAQRAAFEAIRPGVTAEQVDAAARDVLAEAGLAEYFVHRTGHGIGLCVHEEPYIVAGNDLVLVPGMAFSIEPGIYFPGRWGARIEDIVIVTEDGAVSVNNCPHELIVVPVS</sequence>
<dbReference type="EC" id="3.4.13.-"/>
<dbReference type="EMBL" id="LT708304">
    <property type="protein sequence ID" value="SIU00723.1"/>
    <property type="molecule type" value="Genomic_DNA"/>
</dbReference>
<dbReference type="RefSeq" id="NP_855765.1">
    <property type="nucleotide sequence ID" value="NC_002945.3"/>
</dbReference>
<dbReference type="RefSeq" id="WP_003410743.1">
    <property type="nucleotide sequence ID" value="NC_002945.4"/>
</dbReference>
<dbReference type="SMR" id="P65811"/>
<dbReference type="KEGG" id="mbo:BQ2027_MB2116C"/>
<dbReference type="PATRIC" id="fig|233413.5.peg.2326"/>
<dbReference type="Proteomes" id="UP000001419">
    <property type="component" value="Chromosome"/>
</dbReference>
<dbReference type="GO" id="GO:0005886">
    <property type="term" value="C:plasma membrane"/>
    <property type="evidence" value="ECO:0007669"/>
    <property type="project" value="UniProtKB-SubCell"/>
</dbReference>
<dbReference type="GO" id="GO:0016787">
    <property type="term" value="F:hydrolase activity"/>
    <property type="evidence" value="ECO:0007669"/>
    <property type="project" value="UniProtKB-KW"/>
</dbReference>
<dbReference type="GO" id="GO:0046872">
    <property type="term" value="F:metal ion binding"/>
    <property type="evidence" value="ECO:0007669"/>
    <property type="project" value="UniProtKB-KW"/>
</dbReference>
<dbReference type="CDD" id="cd01092">
    <property type="entry name" value="APP-like"/>
    <property type="match status" value="1"/>
</dbReference>
<dbReference type="Gene3D" id="3.90.230.10">
    <property type="entry name" value="Creatinase/methionine aminopeptidase superfamily"/>
    <property type="match status" value="1"/>
</dbReference>
<dbReference type="Gene3D" id="3.40.350.10">
    <property type="entry name" value="Creatinase/prolidase N-terminal domain"/>
    <property type="match status" value="1"/>
</dbReference>
<dbReference type="InterPro" id="IPR029149">
    <property type="entry name" value="Creatin/AminoP/Spt16_N"/>
</dbReference>
<dbReference type="InterPro" id="IPR036005">
    <property type="entry name" value="Creatinase/aminopeptidase-like"/>
</dbReference>
<dbReference type="InterPro" id="IPR000587">
    <property type="entry name" value="Creatinase_N"/>
</dbReference>
<dbReference type="InterPro" id="IPR000994">
    <property type="entry name" value="Pept_M24"/>
</dbReference>
<dbReference type="InterPro" id="IPR050659">
    <property type="entry name" value="Peptidase_M24B"/>
</dbReference>
<dbReference type="InterPro" id="IPR001131">
    <property type="entry name" value="Peptidase_M24B_aminopep-P_CS"/>
</dbReference>
<dbReference type="PANTHER" id="PTHR46112">
    <property type="entry name" value="AMINOPEPTIDASE"/>
    <property type="match status" value="1"/>
</dbReference>
<dbReference type="PANTHER" id="PTHR46112:SF3">
    <property type="entry name" value="AMINOPEPTIDASE YPDF"/>
    <property type="match status" value="1"/>
</dbReference>
<dbReference type="Pfam" id="PF01321">
    <property type="entry name" value="Creatinase_N"/>
    <property type="match status" value="1"/>
</dbReference>
<dbReference type="Pfam" id="PF00557">
    <property type="entry name" value="Peptidase_M24"/>
    <property type="match status" value="1"/>
</dbReference>
<dbReference type="SUPFAM" id="SSF55920">
    <property type="entry name" value="Creatinase/aminopeptidase"/>
    <property type="match status" value="1"/>
</dbReference>
<dbReference type="SUPFAM" id="SSF53092">
    <property type="entry name" value="Creatinase/prolidase N-terminal domain"/>
    <property type="match status" value="1"/>
</dbReference>
<dbReference type="PROSITE" id="PS00491">
    <property type="entry name" value="PROLINE_PEPTIDASE"/>
    <property type="match status" value="1"/>
</dbReference>
<accession>P65811</accession>
<accession>A0A1R3Y066</accession>
<accession>Q10698</accession>
<accession>X2BJP1</accession>
<reference key="1">
    <citation type="journal article" date="2003" name="Proc. Natl. Acad. Sci. U.S.A.">
        <title>The complete genome sequence of Mycobacterium bovis.</title>
        <authorList>
            <person name="Garnier T."/>
            <person name="Eiglmeier K."/>
            <person name="Camus J.-C."/>
            <person name="Medina N."/>
            <person name="Mansoor H."/>
            <person name="Pryor M."/>
            <person name="Duthoy S."/>
            <person name="Grondin S."/>
            <person name="Lacroix C."/>
            <person name="Monsempe C."/>
            <person name="Simon S."/>
            <person name="Harris B."/>
            <person name="Atkin R."/>
            <person name="Doggett J."/>
            <person name="Mayes R."/>
            <person name="Keating L."/>
            <person name="Wheeler P.R."/>
            <person name="Parkhill J."/>
            <person name="Barrell B.G."/>
            <person name="Cole S.T."/>
            <person name="Gordon S.V."/>
            <person name="Hewinson R.G."/>
        </authorList>
    </citation>
    <scope>NUCLEOTIDE SEQUENCE [LARGE SCALE GENOMIC DNA]</scope>
    <source>
        <strain>ATCC BAA-935 / AF2122/97</strain>
    </source>
</reference>
<reference key="2">
    <citation type="journal article" date="2017" name="Genome Announc.">
        <title>Updated reference genome sequence and annotation of Mycobacterium bovis AF2122/97.</title>
        <authorList>
            <person name="Malone K.M."/>
            <person name="Farrell D."/>
            <person name="Stuber T.P."/>
            <person name="Schubert O.T."/>
            <person name="Aebersold R."/>
            <person name="Robbe-Austerman S."/>
            <person name="Gordon S.V."/>
        </authorList>
    </citation>
    <scope>NUCLEOTIDE SEQUENCE [LARGE SCALE GENOMIC DNA]</scope>
    <scope>GENOME REANNOTATION</scope>
    <source>
        <strain>ATCC BAA-935 / AF2122/97</strain>
    </source>
</reference>
<feature type="chain" id="PRO_0000185103" description="Probable dipeptidase PepE">
    <location>
        <begin position="1"/>
        <end position="375"/>
    </location>
</feature>
<feature type="transmembrane region" description="Helical" evidence="1">
    <location>
        <begin position="15"/>
        <end position="35"/>
    </location>
</feature>
<feature type="transmembrane region" description="Helical" evidence="1">
    <location>
        <begin position="55"/>
        <end position="75"/>
    </location>
</feature>
<feature type="binding site" evidence="1">
    <location>
        <position position="230"/>
    </location>
    <ligand>
        <name>Mn(2+)</name>
        <dbReference type="ChEBI" id="CHEBI:29035"/>
        <label>2</label>
    </ligand>
</feature>
<feature type="binding site" evidence="1">
    <location>
        <position position="242"/>
    </location>
    <ligand>
        <name>Mn(2+)</name>
        <dbReference type="ChEBI" id="CHEBI:29035"/>
        <label>1</label>
    </ligand>
</feature>
<feature type="binding site" evidence="1">
    <location>
        <position position="242"/>
    </location>
    <ligand>
        <name>Mn(2+)</name>
        <dbReference type="ChEBI" id="CHEBI:29035"/>
        <label>2</label>
    </ligand>
</feature>
<feature type="binding site" evidence="1">
    <location>
        <position position="306"/>
    </location>
    <ligand>
        <name>Mn(2+)</name>
        <dbReference type="ChEBI" id="CHEBI:29035"/>
        <label>1</label>
    </ligand>
</feature>
<feature type="binding site" evidence="1">
    <location>
        <position position="335"/>
    </location>
    <ligand>
        <name>Mn(2+)</name>
        <dbReference type="ChEBI" id="CHEBI:29035"/>
        <label>1</label>
    </ligand>
</feature>
<feature type="binding site" evidence="1">
    <location>
        <position position="349"/>
    </location>
    <ligand>
        <name>Mn(2+)</name>
        <dbReference type="ChEBI" id="CHEBI:29035"/>
        <label>1</label>
    </ligand>
</feature>
<feature type="binding site" evidence="1">
    <location>
        <position position="349"/>
    </location>
    <ligand>
        <name>Mn(2+)</name>
        <dbReference type="ChEBI" id="CHEBI:29035"/>
        <label>2</label>
    </ligand>
</feature>